<comment type="function">
    <text evidence="3">Part of an ESX-2 / type VII specialized secretion system (T7SS), which exports several proteins. May have ATPase activity and might provide energy for the export of ESX-2 substrates (By similarity).</text>
</comment>
<comment type="subunit">
    <text evidence="3">Part of the ESX-2 / type VII secretion system (T7SS), which is composed of cytosolic and membrane components (By similarity).</text>
</comment>
<comment type="subcellular location">
    <subcellularLocation>
        <location evidence="1">Cytoplasm</location>
    </subcellularLocation>
</comment>
<comment type="similarity">
    <text evidence="5">Belongs to the CbxX/CfxQ family.</text>
</comment>
<evidence type="ECO:0000250" key="1">
    <source>
        <dbReference type="UniProtKB" id="B2HSU9"/>
    </source>
</evidence>
<evidence type="ECO:0000250" key="2">
    <source>
        <dbReference type="UniProtKB" id="P9WPH7"/>
    </source>
</evidence>
<evidence type="ECO:0000250" key="3">
    <source>
        <dbReference type="UniProtKB" id="P9WPH9"/>
    </source>
</evidence>
<evidence type="ECO:0000255" key="4"/>
<evidence type="ECO:0000305" key="5"/>
<sequence>MSRMVDTMGDLLTARRHFDRAMTIKNGQGCVAALPEFVAATEADPSMADAWLGRIACGDRDLASLKQLNAHSEWLHRETTRIGRTLAAEVQLGPSIGITVTDASQVGLALSSALTIAGEYAKADALLANRELLDSWRNYQWHQLARAFLMYVTQRWPDVLSTAAEDLPPQAIVMPAVTASICALAAHAAAHLGQGRVALDWLDRVDVIGHSRSSGRFGADVLTAAIGPADIPLLVADLAYVRGMVYRQLHEEDKAQIWLSKATINGVLTDAAKEALADPNLRLIVTDERTIASRSDRWDASTAKSRDQLDDDNAAQRRGELLAEGRELLAKQVGLAAVKQAVSALEDQLEVRMMRLEHGLPVEGQTNHMLLVGPPGTGKTTTAEALGKIYAGMGIVRHPEIREVRRSDFCGHYIGESGPKTNELIEKSLGRIIFMDEFYSLIERHQDGTPDMIGMEAVNQLLVQLETHRFDFCFIGAGYEDQVDEFLTVNPGLAGRFNRKLRFESYSPVEIVEIGHRYATPRASQLDDAAREVFLDAVTTIRNYTTPSGQHGIDAMQNGRFARNVIERAEGFRDTRVVAQKRAGQPVSVQDLQIITATDIDAAIRSVCSDNRDMAAIVW</sequence>
<proteinExistence type="inferred from homology"/>
<protein>
    <recommendedName>
        <fullName evidence="5">ESX-2 secretion system protein EccA2</fullName>
    </recommendedName>
    <alternativeName>
        <fullName>ESX conserved component A2</fullName>
    </alternativeName>
    <alternativeName>
        <fullName evidence="5">Type VII secretion system protein EccA2</fullName>
        <shortName evidence="5">T7SS protein EccA2</shortName>
    </alternativeName>
</protein>
<name>ECCA2_MYCBO</name>
<reference key="1">
    <citation type="journal article" date="2003" name="Proc. Natl. Acad. Sci. U.S.A.">
        <title>The complete genome sequence of Mycobacterium bovis.</title>
        <authorList>
            <person name="Garnier T."/>
            <person name="Eiglmeier K."/>
            <person name="Camus J.-C."/>
            <person name="Medina N."/>
            <person name="Mansoor H."/>
            <person name="Pryor M."/>
            <person name="Duthoy S."/>
            <person name="Grondin S."/>
            <person name="Lacroix C."/>
            <person name="Monsempe C."/>
            <person name="Simon S."/>
            <person name="Harris B."/>
            <person name="Atkin R."/>
            <person name="Doggett J."/>
            <person name="Mayes R."/>
            <person name="Keating L."/>
            <person name="Wheeler P.R."/>
            <person name="Parkhill J."/>
            <person name="Barrell B.G."/>
            <person name="Cole S.T."/>
            <person name="Gordon S.V."/>
            <person name="Hewinson R.G."/>
        </authorList>
    </citation>
    <scope>NUCLEOTIDE SEQUENCE [LARGE SCALE GENOMIC DNA]</scope>
    <source>
        <strain>ATCC BAA-935 / AF2122/97</strain>
    </source>
</reference>
<reference key="2">
    <citation type="journal article" date="2017" name="Genome Announc.">
        <title>Updated reference genome sequence and annotation of Mycobacterium bovis AF2122/97.</title>
        <authorList>
            <person name="Malone K.M."/>
            <person name="Farrell D."/>
            <person name="Stuber T.P."/>
            <person name="Schubert O.T."/>
            <person name="Aebersold R."/>
            <person name="Robbe-Austerman S."/>
            <person name="Gordon S.V."/>
        </authorList>
    </citation>
    <scope>NUCLEOTIDE SEQUENCE [LARGE SCALE GENOMIC DNA]</scope>
    <scope>GENOME REANNOTATION</scope>
    <source>
        <strain>ATCC BAA-935 / AF2122/97</strain>
    </source>
</reference>
<accession>P59976</accession>
<accession>A0A1R3Y5S1</accession>
<accession>X2BQ44</accession>
<feature type="chain" id="PRO_0000063050" description="ESX-2 secretion system protein EccA2">
    <location>
        <begin position="1"/>
        <end position="619"/>
    </location>
</feature>
<feature type="binding site" evidence="4">
    <location>
        <begin position="373"/>
        <end position="380"/>
    </location>
    <ligand>
        <name>ATP</name>
        <dbReference type="ChEBI" id="CHEBI:30616"/>
    </ligand>
</feature>
<keyword id="KW-0067">ATP-binding</keyword>
<keyword id="KW-0963">Cytoplasm</keyword>
<keyword id="KW-0547">Nucleotide-binding</keyword>
<keyword id="KW-1185">Reference proteome</keyword>
<dbReference type="EMBL" id="LT708304">
    <property type="protein sequence ID" value="SIU02546.1"/>
    <property type="molecule type" value="Genomic_DNA"/>
</dbReference>
<dbReference type="RefSeq" id="NP_857551.1">
    <property type="nucleotide sequence ID" value="NC_002945.3"/>
</dbReference>
<dbReference type="RefSeq" id="WP_003400005.1">
    <property type="nucleotide sequence ID" value="NC_002945.4"/>
</dbReference>
<dbReference type="SMR" id="P59976"/>
<dbReference type="KEGG" id="mbo:BQ2027_MB3914C"/>
<dbReference type="PATRIC" id="fig|233413.5.peg.4289"/>
<dbReference type="Proteomes" id="UP000001419">
    <property type="component" value="Chromosome"/>
</dbReference>
<dbReference type="GO" id="GO:0005737">
    <property type="term" value="C:cytoplasm"/>
    <property type="evidence" value="ECO:0007669"/>
    <property type="project" value="UniProtKB-SubCell"/>
</dbReference>
<dbReference type="GO" id="GO:0005524">
    <property type="term" value="F:ATP binding"/>
    <property type="evidence" value="ECO:0007669"/>
    <property type="project" value="UniProtKB-KW"/>
</dbReference>
<dbReference type="GO" id="GO:0016887">
    <property type="term" value="F:ATP hydrolysis activity"/>
    <property type="evidence" value="ECO:0007669"/>
    <property type="project" value="InterPro"/>
</dbReference>
<dbReference type="CDD" id="cd00009">
    <property type="entry name" value="AAA"/>
    <property type="match status" value="1"/>
</dbReference>
<dbReference type="FunFam" id="1.10.8.60:FF:000203">
    <property type="entry name" value="ESX-2 secretion system protein EccA2"/>
    <property type="match status" value="1"/>
</dbReference>
<dbReference type="FunFam" id="3.40.50.300:FF:001778">
    <property type="entry name" value="Type VII secretion AAA-ATPase EccA"/>
    <property type="match status" value="1"/>
</dbReference>
<dbReference type="Gene3D" id="1.10.8.60">
    <property type="match status" value="1"/>
</dbReference>
<dbReference type="Gene3D" id="3.40.50.300">
    <property type="entry name" value="P-loop containing nucleotide triphosphate hydrolases"/>
    <property type="match status" value="1"/>
</dbReference>
<dbReference type="Gene3D" id="1.25.40.10">
    <property type="entry name" value="Tetratricopeptide repeat domain"/>
    <property type="match status" value="1"/>
</dbReference>
<dbReference type="InterPro" id="IPR003593">
    <property type="entry name" value="AAA+_ATPase"/>
</dbReference>
<dbReference type="InterPro" id="IPR041627">
    <property type="entry name" value="AAA_lid_6"/>
</dbReference>
<dbReference type="InterPro" id="IPR003959">
    <property type="entry name" value="ATPase_AAA_core"/>
</dbReference>
<dbReference type="InterPro" id="IPR000641">
    <property type="entry name" value="CbxX/CfxQ"/>
</dbReference>
<dbReference type="InterPro" id="IPR050773">
    <property type="entry name" value="CbxX/CfxQ_RuBisCO_ESX"/>
</dbReference>
<dbReference type="InterPro" id="IPR027417">
    <property type="entry name" value="P-loop_NTPase"/>
</dbReference>
<dbReference type="InterPro" id="IPR023835">
    <property type="entry name" value="T7SS_EccA"/>
</dbReference>
<dbReference type="InterPro" id="IPR049078">
    <property type="entry name" value="T7SS_EccA1-like_N"/>
</dbReference>
<dbReference type="InterPro" id="IPR011990">
    <property type="entry name" value="TPR-like_helical_dom_sf"/>
</dbReference>
<dbReference type="NCBIfam" id="TIGR03922">
    <property type="entry name" value="T7SS_EccA"/>
    <property type="match status" value="1"/>
</dbReference>
<dbReference type="PANTHER" id="PTHR43392">
    <property type="entry name" value="AAA-TYPE ATPASE FAMILY PROTEIN / ANKYRIN REPEAT FAMILY PROTEIN"/>
    <property type="match status" value="1"/>
</dbReference>
<dbReference type="PANTHER" id="PTHR43392:SF2">
    <property type="entry name" value="AAA-TYPE ATPASE FAMILY PROTEIN _ ANKYRIN REPEAT FAMILY PROTEIN"/>
    <property type="match status" value="1"/>
</dbReference>
<dbReference type="Pfam" id="PF00004">
    <property type="entry name" value="AAA"/>
    <property type="match status" value="1"/>
</dbReference>
<dbReference type="Pfam" id="PF17866">
    <property type="entry name" value="AAA_lid_6"/>
    <property type="match status" value="1"/>
</dbReference>
<dbReference type="Pfam" id="PF21545">
    <property type="entry name" value="T7SS_EccA1_N"/>
    <property type="match status" value="2"/>
</dbReference>
<dbReference type="PRINTS" id="PR00819">
    <property type="entry name" value="CBXCFQXSUPER"/>
</dbReference>
<dbReference type="SMART" id="SM00382">
    <property type="entry name" value="AAA"/>
    <property type="match status" value="1"/>
</dbReference>
<dbReference type="SUPFAM" id="SSF52540">
    <property type="entry name" value="P-loop containing nucleoside triphosphate hydrolases"/>
    <property type="match status" value="1"/>
</dbReference>
<gene>
    <name evidence="2" type="primary">eccA2</name>
    <name type="ordered locus">BQ2027_MB3914C</name>
</gene>
<organism>
    <name type="scientific">Mycobacterium bovis (strain ATCC BAA-935 / AF2122/97)</name>
    <dbReference type="NCBI Taxonomy" id="233413"/>
    <lineage>
        <taxon>Bacteria</taxon>
        <taxon>Bacillati</taxon>
        <taxon>Actinomycetota</taxon>
        <taxon>Actinomycetes</taxon>
        <taxon>Mycobacteriales</taxon>
        <taxon>Mycobacteriaceae</taxon>
        <taxon>Mycobacterium</taxon>
        <taxon>Mycobacterium tuberculosis complex</taxon>
    </lineage>
</organism>